<gene>
    <name evidence="17" type="primary">UBE2B</name>
    <name evidence="13" type="synonym">RAD6B</name>
    <name evidence="14" type="synonym">UBCH1</name>
</gene>
<accession>P63146</accession>
<accession>B2R503</accession>
<accession>D3DQA2</accession>
<accession>P23567</accession>
<accession>Q4PJ15</accession>
<accession>Q9D0J6</accession>
<comment type="function">
    <text evidence="1 5 6 7 8 9 11 12">E2 ubiquitin-conjugating enzyme that accepts ubiquitin from the ubiquitin-activating enzyme E1 and transfers it to a E3 ubiquitin-protein ligase (PubMed:16337599, PubMed:17108083, PubMed:17130289, PubMed:1717990, PubMed:20061386). In vitro catalyzes 'Lys-11'-, as well as 'Lys-48'- and 'Lys-63'-linked polyubiquitination (PubMed:20061386). Together with the E3 enzyme BRE1 (RNF20 and/or RNF40), plays a role in transcription regulation by catalyzing the monoubiquitination of histone H2B at 'Lys-120' to form H2BK120ub1 (PubMed:16337599). H2BK120ub1 gives a specific tag for epigenetic transcriptional activation, elongation by RNA polymerase II, telomeric silencing, and is also a prerequisite for H3K4me and H3K79me formation (PubMed:16337599). May play a role in DNA repair (PubMed:8062904). Associates to the E3 ligase RAD18 to form the UBE2B-RAD18 ubiquitin ligase complex involved in mono-ubiquitination of DNA-associated PCNA on 'Lys-164' (PubMed:17108083, PubMed:17130289). In association with the E3 enzyme UBR4, is involved in N-end rule-dependent protein degradation (PubMed:38182926). May be involved in neurite outgrowth (By similarity).</text>
</comment>
<comment type="catalytic activity">
    <reaction evidence="2 3 9">
        <text>S-ubiquitinyl-[E1 ubiquitin-activating enzyme]-L-cysteine + [E2 ubiquitin-conjugating enzyme]-L-cysteine = [E1 ubiquitin-activating enzyme]-L-cysteine + S-ubiquitinyl-[E2 ubiquitin-conjugating enzyme]-L-cysteine.</text>
        <dbReference type="EC" id="2.3.2.23"/>
    </reaction>
</comment>
<comment type="pathway">
    <text evidence="2 9">Protein modification; protein ubiquitination.</text>
</comment>
<comment type="subunit">
    <text evidence="4 10">Interacts with RAD18, UBR2 and WAC.</text>
</comment>
<comment type="interaction">
    <interactant intactId="EBI-712629">
        <id>P63146</id>
    </interactant>
    <interactant intactId="EBI-742054">
        <id>Q96D03</id>
        <label>DDIT4L</label>
    </interactant>
    <organismsDiffer>false</organismsDiffer>
    <experiments>3</experiments>
</comment>
<comment type="interaction">
    <interactant intactId="EBI-712629">
        <id>P63146</id>
    </interactant>
    <interactant intactId="EBI-5325551">
        <id>Q7L7L0</id>
        <label>H2AC25</label>
    </interactant>
    <organismsDiffer>false</organismsDiffer>
    <experiments>2</experiments>
</comment>
<comment type="interaction">
    <interactant intactId="EBI-712629">
        <id>P63146</id>
    </interactant>
    <interactant intactId="EBI-2868124">
        <id>Q9BSE4</id>
        <label>HERPUD2</label>
    </interactant>
    <organismsDiffer>false</organismsDiffer>
    <experiments>3</experiments>
</comment>
<comment type="interaction">
    <interactant intactId="EBI-712629">
        <id>P63146</id>
    </interactant>
    <interactant intactId="EBI-2339393">
        <id>Q9NS91</id>
        <label>RAD18</label>
    </interactant>
    <organismsDiffer>false</organismsDiffer>
    <experiments>7</experiments>
</comment>
<comment type="interaction">
    <interactant intactId="EBI-712629">
        <id>P63146</id>
    </interactant>
    <interactant intactId="EBI-711736">
        <id>Q8IWV7</id>
        <label>UBR1</label>
    </interactant>
    <organismsDiffer>false</organismsDiffer>
    <experiments>2</experiments>
</comment>
<comment type="subcellular location">
    <subcellularLocation>
        <location evidence="1">Cell membrane</location>
    </subcellularLocation>
    <subcellularLocation>
        <location evidence="1">Nucleus</location>
    </subcellularLocation>
    <text evidence="1">In peripheral neurons, expressed both at the plasma membrane and in nuclei.</text>
</comment>
<comment type="similarity">
    <text evidence="2">Belongs to the ubiquitin-conjugating enzyme family.</text>
</comment>
<proteinExistence type="evidence at protein level"/>
<sequence>MSTPARRRLMRDFKRLQEDPPVGVSGAPSENNIMQWNAVIFGPEGTPFEDGTFKLVIEFSEEYPNKPPTVRFLSKMFHPNVYADGSICLDILQNRWSPTYDVSSILTSIQSLLDEPNPNSPANSQAAQLYQENKREYEKRVSAIVEQSWNDS</sequence>
<evidence type="ECO:0000250" key="1">
    <source>
        <dbReference type="UniProtKB" id="P63149"/>
    </source>
</evidence>
<evidence type="ECO:0000255" key="2">
    <source>
        <dbReference type="PROSITE-ProRule" id="PRU00388"/>
    </source>
</evidence>
<evidence type="ECO:0000255" key="3">
    <source>
        <dbReference type="PROSITE-ProRule" id="PRU10133"/>
    </source>
</evidence>
<evidence type="ECO:0000269" key="4">
    <source>
    </source>
</evidence>
<evidence type="ECO:0000269" key="5">
    <source>
    </source>
</evidence>
<evidence type="ECO:0000269" key="6">
    <source>
    </source>
</evidence>
<evidence type="ECO:0000269" key="7">
    <source>
    </source>
</evidence>
<evidence type="ECO:0000269" key="8">
    <source>
    </source>
</evidence>
<evidence type="ECO:0000269" key="9">
    <source>
    </source>
</evidence>
<evidence type="ECO:0000269" key="10">
    <source>
    </source>
</evidence>
<evidence type="ECO:0000269" key="11">
    <source>
    </source>
</evidence>
<evidence type="ECO:0000269" key="12">
    <source>
    </source>
</evidence>
<evidence type="ECO:0000303" key="13">
    <source>
    </source>
</evidence>
<evidence type="ECO:0000303" key="14">
    <source>
    </source>
</evidence>
<evidence type="ECO:0000305" key="15"/>
<evidence type="ECO:0000305" key="16">
    <source>
    </source>
</evidence>
<evidence type="ECO:0000312" key="17">
    <source>
        <dbReference type="HGNC" id="HGNC:12473"/>
    </source>
</evidence>
<evidence type="ECO:0007829" key="18">
    <source>
        <dbReference type="PDB" id="2YB6"/>
    </source>
</evidence>
<evidence type="ECO:0007829" key="19">
    <source>
        <dbReference type="PDB" id="2YBF"/>
    </source>
</evidence>
<dbReference type="EC" id="2.3.2.23" evidence="9"/>
<dbReference type="EMBL" id="M74525">
    <property type="protein sequence ID" value="AAA35982.1"/>
    <property type="molecule type" value="mRNA"/>
</dbReference>
<dbReference type="EMBL" id="X53251">
    <property type="protein sequence ID" value="CAA37339.1"/>
    <property type="molecule type" value="mRNA"/>
</dbReference>
<dbReference type="EMBL" id="BT007071">
    <property type="protein sequence ID" value="AAP35734.1"/>
    <property type="molecule type" value="mRNA"/>
</dbReference>
<dbReference type="EMBL" id="CR407634">
    <property type="protein sequence ID" value="CAG28562.1"/>
    <property type="molecule type" value="mRNA"/>
</dbReference>
<dbReference type="EMBL" id="DQ090910">
    <property type="protein sequence ID" value="AAY68224.1"/>
    <property type="molecule type" value="Genomic_DNA"/>
</dbReference>
<dbReference type="EMBL" id="AK312012">
    <property type="protein sequence ID" value="BAG34950.1"/>
    <property type="molecule type" value="mRNA"/>
</dbReference>
<dbReference type="EMBL" id="CH471062">
    <property type="protein sequence ID" value="EAW62257.1"/>
    <property type="molecule type" value="Genomic_DNA"/>
</dbReference>
<dbReference type="EMBL" id="CH471062">
    <property type="protein sequence ID" value="EAW62258.1"/>
    <property type="molecule type" value="Genomic_DNA"/>
</dbReference>
<dbReference type="EMBL" id="BC005979">
    <property type="protein sequence ID" value="AAH05979.1"/>
    <property type="molecule type" value="mRNA"/>
</dbReference>
<dbReference type="EMBL" id="BC008404">
    <property type="protein sequence ID" value="AAH08404.1"/>
    <property type="molecule type" value="mRNA"/>
</dbReference>
<dbReference type="EMBL" id="BC008470">
    <property type="protein sequence ID" value="AAH08470.1"/>
    <property type="molecule type" value="mRNA"/>
</dbReference>
<dbReference type="CCDS" id="CCDS4174.1"/>
<dbReference type="PIR" id="B41222">
    <property type="entry name" value="B41222"/>
</dbReference>
<dbReference type="RefSeq" id="NP_003328.1">
    <property type="nucleotide sequence ID" value="NM_003337.4"/>
</dbReference>
<dbReference type="PDB" id="1JAS">
    <property type="method" value="NMR"/>
    <property type="chains" value="A=1-152"/>
</dbReference>
<dbReference type="PDB" id="2Y4W">
    <property type="method" value="NMR"/>
    <property type="chains" value="A=1-152"/>
</dbReference>
<dbReference type="PDB" id="2YB6">
    <property type="method" value="X-ray"/>
    <property type="resolution" value="1.50 A"/>
    <property type="chains" value="A=1-152"/>
</dbReference>
<dbReference type="PDB" id="2YBF">
    <property type="method" value="X-ray"/>
    <property type="resolution" value="2.00 A"/>
    <property type="chains" value="A=1-152"/>
</dbReference>
<dbReference type="PDBsum" id="1JAS"/>
<dbReference type="PDBsum" id="2Y4W"/>
<dbReference type="PDBsum" id="2YB6"/>
<dbReference type="PDBsum" id="2YBF"/>
<dbReference type="BMRB" id="P63146"/>
<dbReference type="SMR" id="P63146"/>
<dbReference type="BioGRID" id="113168">
    <property type="interactions" value="91"/>
</dbReference>
<dbReference type="DIP" id="DIP-29832N"/>
<dbReference type="FunCoup" id="P63146">
    <property type="interactions" value="2779"/>
</dbReference>
<dbReference type="IntAct" id="P63146">
    <property type="interactions" value="25"/>
</dbReference>
<dbReference type="MINT" id="P63146"/>
<dbReference type="STRING" id="9606.ENSP00000265339"/>
<dbReference type="BindingDB" id="P63146"/>
<dbReference type="ChEMBL" id="CHEMBL3784907"/>
<dbReference type="GlyGen" id="P63146">
    <property type="glycosylation" value="1 site"/>
</dbReference>
<dbReference type="iPTMnet" id="P63146"/>
<dbReference type="PhosphoSitePlus" id="P63146"/>
<dbReference type="BioMuta" id="UBE2B"/>
<dbReference type="DMDM" id="52783814"/>
<dbReference type="jPOST" id="P63146"/>
<dbReference type="MassIVE" id="P63146"/>
<dbReference type="PaxDb" id="9606-ENSP00000265339"/>
<dbReference type="PeptideAtlas" id="P63146"/>
<dbReference type="ProteomicsDB" id="57496"/>
<dbReference type="Pumba" id="P63146"/>
<dbReference type="TopDownProteomics" id="P63146"/>
<dbReference type="Antibodypedia" id="26297">
    <property type="antibodies" value="276 antibodies from 34 providers"/>
</dbReference>
<dbReference type="DNASU" id="7320"/>
<dbReference type="Ensembl" id="ENST00000265339.7">
    <property type="protein sequence ID" value="ENSP00000265339.2"/>
    <property type="gene ID" value="ENSG00000119048.9"/>
</dbReference>
<dbReference type="GeneID" id="7320"/>
<dbReference type="KEGG" id="hsa:7320"/>
<dbReference type="MANE-Select" id="ENST00000265339.7">
    <property type="protein sequence ID" value="ENSP00000265339.2"/>
    <property type="RefSeq nucleotide sequence ID" value="NM_003337.4"/>
    <property type="RefSeq protein sequence ID" value="NP_003328.1"/>
</dbReference>
<dbReference type="UCSC" id="uc003kzh.4">
    <property type="organism name" value="human"/>
</dbReference>
<dbReference type="AGR" id="HGNC:12473"/>
<dbReference type="CTD" id="7320"/>
<dbReference type="DisGeNET" id="7320"/>
<dbReference type="GeneCards" id="UBE2B"/>
<dbReference type="HGNC" id="HGNC:12473">
    <property type="gene designation" value="UBE2B"/>
</dbReference>
<dbReference type="HPA" id="ENSG00000119048">
    <property type="expression patterns" value="Tissue enhanced (skeletal)"/>
</dbReference>
<dbReference type="MIM" id="179095">
    <property type="type" value="gene"/>
</dbReference>
<dbReference type="neXtProt" id="NX_P63146"/>
<dbReference type="OpenTargets" id="ENSG00000119048"/>
<dbReference type="PharmGKB" id="PA37123"/>
<dbReference type="VEuPathDB" id="HostDB:ENSG00000119048"/>
<dbReference type="eggNOG" id="KOG0419">
    <property type="taxonomic scope" value="Eukaryota"/>
</dbReference>
<dbReference type="GeneTree" id="ENSGT00940000156580"/>
<dbReference type="HOGENOM" id="CLU_030988_10_2_1"/>
<dbReference type="InParanoid" id="P63146"/>
<dbReference type="OMA" id="MMYCHAI"/>
<dbReference type="OrthoDB" id="9984419at2759"/>
<dbReference type="PAN-GO" id="P63146">
    <property type="GO annotations" value="6 GO annotations based on evolutionary models"/>
</dbReference>
<dbReference type="PhylomeDB" id="P63146"/>
<dbReference type="TreeFam" id="TF101128"/>
<dbReference type="BRENDA" id="2.3.2.23">
    <property type="organism ID" value="2681"/>
</dbReference>
<dbReference type="BRENDA" id="2.3.2.24">
    <property type="organism ID" value="2681"/>
</dbReference>
<dbReference type="PathwayCommons" id="P63146"/>
<dbReference type="Reactome" id="R-HSA-110314">
    <property type="pathway name" value="Recognition of DNA damage by PCNA-containing replication complex"/>
</dbReference>
<dbReference type="Reactome" id="R-HSA-8866652">
    <property type="pathway name" value="Synthesis of active ubiquitin: roles of E1 and E2 enzymes"/>
</dbReference>
<dbReference type="Reactome" id="R-HSA-8866654">
    <property type="pathway name" value="E3 ubiquitin ligases ubiquitinate target proteins"/>
</dbReference>
<dbReference type="Reactome" id="R-HSA-983168">
    <property type="pathway name" value="Antigen processing: Ubiquitination &amp; Proteasome degradation"/>
</dbReference>
<dbReference type="SignaLink" id="P63146"/>
<dbReference type="SIGNOR" id="P63146"/>
<dbReference type="UniPathway" id="UPA00143"/>
<dbReference type="BioGRID-ORCS" id="7320">
    <property type="hits" value="10 hits in 1163 CRISPR screens"/>
</dbReference>
<dbReference type="ChiTaRS" id="UBE2B">
    <property type="organism name" value="human"/>
</dbReference>
<dbReference type="EvolutionaryTrace" id="P63146"/>
<dbReference type="GeneWiki" id="UBE2B"/>
<dbReference type="GenomeRNAi" id="7320"/>
<dbReference type="Pharos" id="P63146">
    <property type="development level" value="Tchem"/>
</dbReference>
<dbReference type="PRO" id="PR:P63146"/>
<dbReference type="Proteomes" id="UP000005640">
    <property type="component" value="Chromosome 5"/>
</dbReference>
<dbReference type="RNAct" id="P63146">
    <property type="molecule type" value="protein"/>
</dbReference>
<dbReference type="Bgee" id="ENSG00000119048">
    <property type="expression patterns" value="Expressed in hindlimb stylopod muscle and 204 other cell types or tissues"/>
</dbReference>
<dbReference type="ExpressionAtlas" id="P63146">
    <property type="expression patterns" value="baseline and differential"/>
</dbReference>
<dbReference type="GO" id="GO:0000785">
    <property type="term" value="C:chromatin"/>
    <property type="evidence" value="ECO:0000250"/>
    <property type="project" value="UniProtKB"/>
</dbReference>
<dbReference type="GO" id="GO:0005737">
    <property type="term" value="C:cytoplasm"/>
    <property type="evidence" value="ECO:0000314"/>
    <property type="project" value="UniProtKB"/>
</dbReference>
<dbReference type="GO" id="GO:0033503">
    <property type="term" value="C:HULC complex"/>
    <property type="evidence" value="ECO:0000314"/>
    <property type="project" value="UniProtKB"/>
</dbReference>
<dbReference type="GO" id="GO:0005654">
    <property type="term" value="C:nucleoplasm"/>
    <property type="evidence" value="ECO:0000304"/>
    <property type="project" value="Reactome"/>
</dbReference>
<dbReference type="GO" id="GO:0005634">
    <property type="term" value="C:nucleus"/>
    <property type="evidence" value="ECO:0000314"/>
    <property type="project" value="UniProtKB"/>
</dbReference>
<dbReference type="GO" id="GO:0005886">
    <property type="term" value="C:plasma membrane"/>
    <property type="evidence" value="ECO:0007669"/>
    <property type="project" value="UniProtKB-SubCell"/>
</dbReference>
<dbReference type="GO" id="GO:0005657">
    <property type="term" value="C:replication fork"/>
    <property type="evidence" value="ECO:0000314"/>
    <property type="project" value="UniProtKB"/>
</dbReference>
<dbReference type="GO" id="GO:0001741">
    <property type="term" value="C:XY body"/>
    <property type="evidence" value="ECO:0007669"/>
    <property type="project" value="Ensembl"/>
</dbReference>
<dbReference type="GO" id="GO:0005524">
    <property type="term" value="F:ATP binding"/>
    <property type="evidence" value="ECO:0007669"/>
    <property type="project" value="UniProtKB-KW"/>
</dbReference>
<dbReference type="GO" id="GO:0061631">
    <property type="term" value="F:ubiquitin conjugating enzyme activity"/>
    <property type="evidence" value="ECO:0000314"/>
    <property type="project" value="UniProtKB"/>
</dbReference>
<dbReference type="GO" id="GO:0031625">
    <property type="term" value="F:ubiquitin protein ligase binding"/>
    <property type="evidence" value="ECO:0000353"/>
    <property type="project" value="UniProtKB"/>
</dbReference>
<dbReference type="GO" id="GO:0004842">
    <property type="term" value="F:ubiquitin-protein transferase activity"/>
    <property type="evidence" value="ECO:0000314"/>
    <property type="project" value="UniProtKB"/>
</dbReference>
<dbReference type="GO" id="GO:0006915">
    <property type="term" value="P:apoptotic process"/>
    <property type="evidence" value="ECO:0007669"/>
    <property type="project" value="Ensembl"/>
</dbReference>
<dbReference type="GO" id="GO:0051026">
    <property type="term" value="P:chiasma assembly"/>
    <property type="evidence" value="ECO:0007669"/>
    <property type="project" value="Ensembl"/>
</dbReference>
<dbReference type="GO" id="GO:0006325">
    <property type="term" value="P:chromatin organization"/>
    <property type="evidence" value="ECO:0007669"/>
    <property type="project" value="Ensembl"/>
</dbReference>
<dbReference type="GO" id="GO:0006974">
    <property type="term" value="P:DNA damage response"/>
    <property type="evidence" value="ECO:0000314"/>
    <property type="project" value="UniProtKB"/>
</dbReference>
<dbReference type="GO" id="GO:0006281">
    <property type="term" value="P:DNA repair"/>
    <property type="evidence" value="ECO:0000316"/>
    <property type="project" value="UniProtKB"/>
</dbReference>
<dbReference type="GO" id="GO:0035234">
    <property type="term" value="P:ectopic germ cell programmed cell death"/>
    <property type="evidence" value="ECO:0007669"/>
    <property type="project" value="Ensembl"/>
</dbReference>
<dbReference type="GO" id="GO:0001701">
    <property type="term" value="P:in utero embryonic development"/>
    <property type="evidence" value="ECO:0007669"/>
    <property type="project" value="Ensembl"/>
</dbReference>
<dbReference type="GO" id="GO:0045141">
    <property type="term" value="P:meiotic telomere clustering"/>
    <property type="evidence" value="ECO:0007669"/>
    <property type="project" value="Ensembl"/>
</dbReference>
<dbReference type="GO" id="GO:0043066">
    <property type="term" value="P:negative regulation of apoptotic process"/>
    <property type="evidence" value="ECO:0007669"/>
    <property type="project" value="Ensembl"/>
</dbReference>
<dbReference type="GO" id="GO:0051093">
    <property type="term" value="P:negative regulation of developmental process"/>
    <property type="evidence" value="ECO:0007669"/>
    <property type="project" value="Ensembl"/>
</dbReference>
<dbReference type="GO" id="GO:1901874">
    <property type="term" value="P:negative regulation of post-translational protein modification"/>
    <property type="evidence" value="ECO:0007669"/>
    <property type="project" value="Ensembl"/>
</dbReference>
<dbReference type="GO" id="GO:2000242">
    <property type="term" value="P:negative regulation of reproductive process"/>
    <property type="evidence" value="ECO:0007669"/>
    <property type="project" value="Ensembl"/>
</dbReference>
<dbReference type="GO" id="GO:0090263">
    <property type="term" value="P:positive regulation of canonical Wnt signaling pathway"/>
    <property type="evidence" value="ECO:0000250"/>
    <property type="project" value="UniProtKB"/>
</dbReference>
<dbReference type="GO" id="GO:0010845">
    <property type="term" value="P:positive regulation of reciprocal meiotic recombination"/>
    <property type="evidence" value="ECO:0007669"/>
    <property type="project" value="Ensembl"/>
</dbReference>
<dbReference type="GO" id="GO:0006301">
    <property type="term" value="P:postreplication repair"/>
    <property type="evidence" value="ECO:0000314"/>
    <property type="project" value="UniProtKB"/>
</dbReference>
<dbReference type="GO" id="GO:0043161">
    <property type="term" value="P:proteasome-mediated ubiquitin-dependent protein catabolic process"/>
    <property type="evidence" value="ECO:0000314"/>
    <property type="project" value="UniProtKB"/>
</dbReference>
<dbReference type="GO" id="GO:0051865">
    <property type="term" value="P:protein autoubiquitination"/>
    <property type="evidence" value="ECO:0000314"/>
    <property type="project" value="UniProtKB"/>
</dbReference>
<dbReference type="GO" id="GO:0070979">
    <property type="term" value="P:protein K11-linked ubiquitination"/>
    <property type="evidence" value="ECO:0000314"/>
    <property type="project" value="UniProtKB"/>
</dbReference>
<dbReference type="GO" id="GO:0070936">
    <property type="term" value="P:protein K48-linked ubiquitination"/>
    <property type="evidence" value="ECO:0000314"/>
    <property type="project" value="UniProtKB"/>
</dbReference>
<dbReference type="GO" id="GO:0070534">
    <property type="term" value="P:protein K63-linked ubiquitination"/>
    <property type="evidence" value="ECO:0000314"/>
    <property type="project" value="UniProtKB"/>
</dbReference>
<dbReference type="GO" id="GO:0000209">
    <property type="term" value="P:protein polyubiquitination"/>
    <property type="evidence" value="ECO:0000318"/>
    <property type="project" value="GO_Central"/>
</dbReference>
<dbReference type="GO" id="GO:0050821">
    <property type="term" value="P:protein stabilization"/>
    <property type="evidence" value="ECO:0000315"/>
    <property type="project" value="UniProtKB"/>
</dbReference>
<dbReference type="GO" id="GO:0016567">
    <property type="term" value="P:protein ubiquitination"/>
    <property type="evidence" value="ECO:0000314"/>
    <property type="project" value="UniProtKB"/>
</dbReference>
<dbReference type="GO" id="GO:0009411">
    <property type="term" value="P:response to UV"/>
    <property type="evidence" value="ECO:0000316"/>
    <property type="project" value="UniProtKB"/>
</dbReference>
<dbReference type="GO" id="GO:0009410">
    <property type="term" value="P:response to xenobiotic stimulus"/>
    <property type="evidence" value="ECO:0000314"/>
    <property type="project" value="UniProtKB"/>
</dbReference>
<dbReference type="GO" id="GO:0007288">
    <property type="term" value="P:sperm axoneme assembly"/>
    <property type="evidence" value="ECO:0007669"/>
    <property type="project" value="Ensembl"/>
</dbReference>
<dbReference type="GO" id="GO:0007283">
    <property type="term" value="P:spermatogenesis"/>
    <property type="evidence" value="ECO:0000304"/>
    <property type="project" value="UniProtKB"/>
</dbReference>
<dbReference type="GO" id="GO:0070193">
    <property type="term" value="P:synaptonemal complex organization"/>
    <property type="evidence" value="ECO:0007669"/>
    <property type="project" value="Ensembl"/>
</dbReference>
<dbReference type="GO" id="GO:0006511">
    <property type="term" value="P:ubiquitin-dependent protein catabolic process"/>
    <property type="evidence" value="ECO:0000314"/>
    <property type="project" value="UniProtKB"/>
</dbReference>
<dbReference type="CDD" id="cd23790">
    <property type="entry name" value="UBCc_UBE2A_2B"/>
    <property type="match status" value="1"/>
</dbReference>
<dbReference type="FunFam" id="3.10.110.10:FF:000062">
    <property type="entry name" value="Ubiquitin-conjugating enzyme E2 B"/>
    <property type="match status" value="1"/>
</dbReference>
<dbReference type="Gene3D" id="3.10.110.10">
    <property type="entry name" value="Ubiquitin Conjugating Enzyme"/>
    <property type="match status" value="1"/>
</dbReference>
<dbReference type="IDEAL" id="IID00558"/>
<dbReference type="InterPro" id="IPR050113">
    <property type="entry name" value="Ub_conjugating_enzyme"/>
</dbReference>
<dbReference type="InterPro" id="IPR000608">
    <property type="entry name" value="UBQ-conjugat_E2_core"/>
</dbReference>
<dbReference type="InterPro" id="IPR023313">
    <property type="entry name" value="UBQ-conjugating_AS"/>
</dbReference>
<dbReference type="InterPro" id="IPR016135">
    <property type="entry name" value="UBQ-conjugating_enzyme/RWD"/>
</dbReference>
<dbReference type="PANTHER" id="PTHR24067">
    <property type="entry name" value="UBIQUITIN-CONJUGATING ENZYME E2"/>
    <property type="match status" value="1"/>
</dbReference>
<dbReference type="Pfam" id="PF00179">
    <property type="entry name" value="UQ_con"/>
    <property type="match status" value="1"/>
</dbReference>
<dbReference type="SMART" id="SM00212">
    <property type="entry name" value="UBCc"/>
    <property type="match status" value="1"/>
</dbReference>
<dbReference type="SUPFAM" id="SSF54495">
    <property type="entry name" value="UBC-like"/>
    <property type="match status" value="1"/>
</dbReference>
<dbReference type="PROSITE" id="PS00183">
    <property type="entry name" value="UBC_1"/>
    <property type="match status" value="1"/>
</dbReference>
<dbReference type="PROSITE" id="PS50127">
    <property type="entry name" value="UBC_2"/>
    <property type="match status" value="1"/>
</dbReference>
<protein>
    <recommendedName>
        <fullName evidence="16">Ubiquitin-conjugating enzyme E2 B</fullName>
        <ecNumber evidence="9">2.3.2.23</ecNumber>
    </recommendedName>
    <alternativeName>
        <fullName>E2 ubiquitin-conjugating enzyme B</fullName>
    </alternativeName>
    <alternativeName>
        <fullName evidence="13">RAD6 homolog B</fullName>
        <shortName evidence="13">HR6B</shortName>
        <shortName evidence="13">hHR6B</shortName>
    </alternativeName>
    <alternativeName>
        <fullName>Ubiquitin carrier protein B</fullName>
    </alternativeName>
    <alternativeName>
        <fullName>Ubiquitin-conjugating enzyme E2-17 kDa</fullName>
    </alternativeName>
    <alternativeName>
        <fullName>Ubiquitin-protein ligase B</fullName>
    </alternativeName>
</protein>
<reference key="1">
    <citation type="journal article" date="1990" name="EMBO J.">
        <title>The human ubiquitin carrier protein E2(Mr = 17,000) is homologous to the yeast DNA repair gene RAD6.</title>
        <authorList>
            <person name="Schneider R."/>
            <person name="Eckerskorn C."/>
            <person name="Lottspeich F."/>
            <person name="Schweiger M."/>
        </authorList>
    </citation>
    <scope>NUCLEOTIDE SEQUENCE [MRNA]</scope>
    <scope>PARTIAL PROTEIN SEQUENCE</scope>
    <source>
        <tissue>Placenta</tissue>
    </source>
</reference>
<reference key="2">
    <citation type="journal article" date="1991" name="Biochim. Biophys. Acta">
        <title>Mammalian mRNAs encoding protein closely related to ubiquitin-conjugating enzyme encoded by yeast DNA repair gene RAD6.</title>
        <authorList>
            <person name="Woffendin C."/>
            <person name="Chen Z.Y."/>
            <person name="Staskus K."/>
            <person name="Retzel E.F."/>
            <person name="Plagemann P.G."/>
        </authorList>
    </citation>
    <scope>NUCLEOTIDE SEQUENCE [MRNA]</scope>
    <source>
        <tissue>Brain</tissue>
    </source>
</reference>
<reference key="3">
    <citation type="journal article" date="1991" name="Proc. Natl. Acad. Sci. U.S.A.">
        <title>Structural and functional conservation of two human homologs of the yeast DNA repair gene RAD6.</title>
        <authorList>
            <person name="Koken M.H.M."/>
            <person name="Reynolds P."/>
            <person name="Jaspers-Dekker I."/>
            <person name="Prakash L."/>
            <person name="Prakash S."/>
            <person name="Bootsma D."/>
            <person name="Hoeijmakers J.H.J."/>
        </authorList>
    </citation>
    <scope>NUCLEOTIDE SEQUENCE [MRNA]</scope>
    <scope>FUNCTION</scope>
</reference>
<reference key="4">
    <citation type="submission" date="2003-05" db="EMBL/GenBank/DDBJ databases">
        <title>Cloning of human full-length CDSs in BD Creator(TM) system donor vector.</title>
        <authorList>
            <person name="Kalnine N."/>
            <person name="Chen X."/>
            <person name="Rolfs A."/>
            <person name="Halleck A."/>
            <person name="Hines L."/>
            <person name="Eisenstein S."/>
            <person name="Koundinya M."/>
            <person name="Raphael J."/>
            <person name="Moreira D."/>
            <person name="Kelley T."/>
            <person name="LaBaer J."/>
            <person name="Lin Y."/>
            <person name="Phelan M."/>
            <person name="Farmer A."/>
        </authorList>
    </citation>
    <scope>NUCLEOTIDE SEQUENCE [LARGE SCALE MRNA]</scope>
</reference>
<reference key="5">
    <citation type="submission" date="2004-05" db="EMBL/GenBank/DDBJ databases">
        <title>Cloning of human full open reading frames in Gateway(TM) system entry vector (pDONR201).</title>
        <authorList>
            <person name="Ebert L."/>
            <person name="Schick M."/>
            <person name="Neubert P."/>
            <person name="Schatten R."/>
            <person name="Henze S."/>
            <person name="Korn B."/>
        </authorList>
    </citation>
    <scope>NUCLEOTIDE SEQUENCE [LARGE SCALE MRNA]</scope>
</reference>
<reference key="6">
    <citation type="journal article" date="2004" name="Nat. Genet.">
        <title>Complete sequencing and characterization of 21,243 full-length human cDNAs.</title>
        <authorList>
            <person name="Ota T."/>
            <person name="Suzuki Y."/>
            <person name="Nishikawa T."/>
            <person name="Otsuki T."/>
            <person name="Sugiyama T."/>
            <person name="Irie R."/>
            <person name="Wakamatsu A."/>
            <person name="Hayashi K."/>
            <person name="Sato H."/>
            <person name="Nagai K."/>
            <person name="Kimura K."/>
            <person name="Makita H."/>
            <person name="Sekine M."/>
            <person name="Obayashi M."/>
            <person name="Nishi T."/>
            <person name="Shibahara T."/>
            <person name="Tanaka T."/>
            <person name="Ishii S."/>
            <person name="Yamamoto J."/>
            <person name="Saito K."/>
            <person name="Kawai Y."/>
            <person name="Isono Y."/>
            <person name="Nakamura Y."/>
            <person name="Nagahari K."/>
            <person name="Murakami K."/>
            <person name="Yasuda T."/>
            <person name="Iwayanagi T."/>
            <person name="Wagatsuma M."/>
            <person name="Shiratori A."/>
            <person name="Sudo H."/>
            <person name="Hosoiri T."/>
            <person name="Kaku Y."/>
            <person name="Kodaira H."/>
            <person name="Kondo H."/>
            <person name="Sugawara M."/>
            <person name="Takahashi M."/>
            <person name="Kanda K."/>
            <person name="Yokoi T."/>
            <person name="Furuya T."/>
            <person name="Kikkawa E."/>
            <person name="Omura Y."/>
            <person name="Abe K."/>
            <person name="Kamihara K."/>
            <person name="Katsuta N."/>
            <person name="Sato K."/>
            <person name="Tanikawa M."/>
            <person name="Yamazaki M."/>
            <person name="Ninomiya K."/>
            <person name="Ishibashi T."/>
            <person name="Yamashita H."/>
            <person name="Murakawa K."/>
            <person name="Fujimori K."/>
            <person name="Tanai H."/>
            <person name="Kimata M."/>
            <person name="Watanabe M."/>
            <person name="Hiraoka S."/>
            <person name="Chiba Y."/>
            <person name="Ishida S."/>
            <person name="Ono Y."/>
            <person name="Takiguchi S."/>
            <person name="Watanabe S."/>
            <person name="Yosida M."/>
            <person name="Hotuta T."/>
            <person name="Kusano J."/>
            <person name="Kanehori K."/>
            <person name="Takahashi-Fujii A."/>
            <person name="Hara H."/>
            <person name="Tanase T.-O."/>
            <person name="Nomura Y."/>
            <person name="Togiya S."/>
            <person name="Komai F."/>
            <person name="Hara R."/>
            <person name="Takeuchi K."/>
            <person name="Arita M."/>
            <person name="Imose N."/>
            <person name="Musashino K."/>
            <person name="Yuuki H."/>
            <person name="Oshima A."/>
            <person name="Sasaki N."/>
            <person name="Aotsuka S."/>
            <person name="Yoshikawa Y."/>
            <person name="Matsunawa H."/>
            <person name="Ichihara T."/>
            <person name="Shiohata N."/>
            <person name="Sano S."/>
            <person name="Moriya S."/>
            <person name="Momiyama H."/>
            <person name="Satoh N."/>
            <person name="Takami S."/>
            <person name="Terashima Y."/>
            <person name="Suzuki O."/>
            <person name="Nakagawa S."/>
            <person name="Senoh A."/>
            <person name="Mizoguchi H."/>
            <person name="Goto Y."/>
            <person name="Shimizu F."/>
            <person name="Wakebe H."/>
            <person name="Hishigaki H."/>
            <person name="Watanabe T."/>
            <person name="Sugiyama A."/>
            <person name="Takemoto M."/>
            <person name="Kawakami B."/>
            <person name="Yamazaki M."/>
            <person name="Watanabe K."/>
            <person name="Kumagai A."/>
            <person name="Itakura S."/>
            <person name="Fukuzumi Y."/>
            <person name="Fujimori Y."/>
            <person name="Komiyama M."/>
            <person name="Tashiro H."/>
            <person name="Tanigami A."/>
            <person name="Fujiwara T."/>
            <person name="Ono T."/>
            <person name="Yamada K."/>
            <person name="Fujii Y."/>
            <person name="Ozaki K."/>
            <person name="Hirao M."/>
            <person name="Ohmori Y."/>
            <person name="Kawabata A."/>
            <person name="Hikiji T."/>
            <person name="Kobatake N."/>
            <person name="Inagaki H."/>
            <person name="Ikema Y."/>
            <person name="Okamoto S."/>
            <person name="Okitani R."/>
            <person name="Kawakami T."/>
            <person name="Noguchi S."/>
            <person name="Itoh T."/>
            <person name="Shigeta K."/>
            <person name="Senba T."/>
            <person name="Matsumura K."/>
            <person name="Nakajima Y."/>
            <person name="Mizuno T."/>
            <person name="Morinaga M."/>
            <person name="Sasaki M."/>
            <person name="Togashi T."/>
            <person name="Oyama M."/>
            <person name="Hata H."/>
            <person name="Watanabe M."/>
            <person name="Komatsu T."/>
            <person name="Mizushima-Sugano J."/>
            <person name="Satoh T."/>
            <person name="Shirai Y."/>
            <person name="Takahashi Y."/>
            <person name="Nakagawa K."/>
            <person name="Okumura K."/>
            <person name="Nagase T."/>
            <person name="Nomura N."/>
            <person name="Kikuchi H."/>
            <person name="Masuho Y."/>
            <person name="Yamashita R."/>
            <person name="Nakai K."/>
            <person name="Yada T."/>
            <person name="Nakamura Y."/>
            <person name="Ohara O."/>
            <person name="Isogai T."/>
            <person name="Sugano S."/>
        </authorList>
    </citation>
    <scope>NUCLEOTIDE SEQUENCE [LARGE SCALE MRNA]</scope>
    <source>
        <tissue>Brain</tissue>
    </source>
</reference>
<reference key="7">
    <citation type="submission" date="2005-06" db="EMBL/GenBank/DDBJ databases">
        <authorList>
            <consortium name="NIEHS SNPs program"/>
        </authorList>
    </citation>
    <scope>NUCLEOTIDE SEQUENCE [GENOMIC DNA]</scope>
</reference>
<reference key="8">
    <citation type="submission" date="2005-09" db="EMBL/GenBank/DDBJ databases">
        <authorList>
            <person name="Mural R.J."/>
            <person name="Istrail S."/>
            <person name="Sutton G.G."/>
            <person name="Florea L."/>
            <person name="Halpern A.L."/>
            <person name="Mobarry C.M."/>
            <person name="Lippert R."/>
            <person name="Walenz B."/>
            <person name="Shatkay H."/>
            <person name="Dew I."/>
            <person name="Miller J.R."/>
            <person name="Flanigan M.J."/>
            <person name="Edwards N.J."/>
            <person name="Bolanos R."/>
            <person name="Fasulo D."/>
            <person name="Halldorsson B.V."/>
            <person name="Hannenhalli S."/>
            <person name="Turner R."/>
            <person name="Yooseph S."/>
            <person name="Lu F."/>
            <person name="Nusskern D.R."/>
            <person name="Shue B.C."/>
            <person name="Zheng X.H."/>
            <person name="Zhong F."/>
            <person name="Delcher A.L."/>
            <person name="Huson D.H."/>
            <person name="Kravitz S.A."/>
            <person name="Mouchard L."/>
            <person name="Reinert K."/>
            <person name="Remington K.A."/>
            <person name="Clark A.G."/>
            <person name="Waterman M.S."/>
            <person name="Eichler E.E."/>
            <person name="Adams M.D."/>
            <person name="Hunkapiller M.W."/>
            <person name="Myers E.W."/>
            <person name="Venter J.C."/>
        </authorList>
    </citation>
    <scope>NUCLEOTIDE SEQUENCE [LARGE SCALE GENOMIC DNA]</scope>
</reference>
<reference key="9">
    <citation type="journal article" date="2004" name="Genome Res.">
        <title>The status, quality, and expansion of the NIH full-length cDNA project: the Mammalian Gene Collection (MGC).</title>
        <authorList>
            <consortium name="The MGC Project Team"/>
        </authorList>
    </citation>
    <scope>NUCLEOTIDE SEQUENCE [LARGE SCALE MRNA]</scope>
    <source>
        <tissue>Bone marrow</tissue>
        <tissue>Brain</tissue>
    </source>
</reference>
<reference key="10">
    <citation type="journal article" date="1994" name="FEBS Lett.">
        <title>The human ubiquitin-conjugating enzyme UbcH1 is involved in the repair of UV-damaged, alkylated and cross-linked DNA.</title>
        <authorList>
            <person name="Kaiser P."/>
            <person name="Mansour H.A."/>
            <person name="Greeten T."/>
            <person name="Auer B."/>
            <person name="Schweiger M."/>
            <person name="Schneider R."/>
        </authorList>
    </citation>
    <scope>FUNCTION</scope>
</reference>
<reference key="11">
    <citation type="journal article" date="2000" name="Nucleic Acids Res.">
        <title>The human RAD18 gene product interacts with HHR6A and HHR6B.</title>
        <authorList>
            <person name="Xin H."/>
            <person name="Lin W."/>
            <person name="Sumanasekera W."/>
            <person name="Zhang Y."/>
            <person name="Wu X."/>
            <person name="Wang Z."/>
        </authorList>
    </citation>
    <scope>INTERACTION WITH RAD18</scope>
</reference>
<reference key="12">
    <citation type="journal article" date="2005" name="Mol. Cell">
        <title>The human homolog of yeast BRE1 functions as a transcriptional coactivator through direct activator interactions.</title>
        <authorList>
            <person name="Kim J."/>
            <person name="Hake S.B."/>
            <person name="Roeder R.G."/>
        </authorList>
    </citation>
    <scope>FUNCTION</scope>
</reference>
<reference key="13">
    <citation type="journal article" date="2006" name="J. Cell Biol.">
        <title>Human SHPRH suppresses genomic instability through proliferating cell nuclear antigen polyubiquitination.</title>
        <authorList>
            <person name="Motegi A."/>
            <person name="Sood R."/>
            <person name="Moinova H."/>
            <person name="Markowitz S.D."/>
            <person name="Liu P.P."/>
            <person name="Myung K."/>
        </authorList>
    </citation>
    <scope>FUNCTION</scope>
</reference>
<reference key="14">
    <citation type="journal article" date="2006" name="Proc. Natl. Acad. Sci. U.S.A.">
        <title>Human SHPRH is a ubiquitin ligase for Mms2-Ubc13-dependent polyubiquitylation of proliferating cell nuclear antigen.</title>
        <authorList>
            <person name="Unk I."/>
            <person name="Hajdu I."/>
            <person name="Fatyol K."/>
            <person name="Szakal B."/>
            <person name="Blastyak A."/>
            <person name="Bermudez V."/>
            <person name="Hurwitz J."/>
            <person name="Prakash L."/>
            <person name="Prakash S."/>
            <person name="Haracska L."/>
        </authorList>
    </citation>
    <scope>FUNCTION</scope>
</reference>
<reference key="15">
    <citation type="journal article" date="2010" name="J. Biol. Chem.">
        <title>The E2 ubiquitin-conjugating enzymes direct polyubiquitination to preferred lysines.</title>
        <authorList>
            <person name="David Y."/>
            <person name="Ziv T."/>
            <person name="Admon A."/>
            <person name="Navon A."/>
        </authorList>
    </citation>
    <scope>FUNCTION</scope>
    <scope>CATALYTIC ACTIVITY</scope>
    <scope>PATHWAY</scope>
</reference>
<reference key="16">
    <citation type="journal article" date="2011" name="Mol. Cell">
        <title>WAC, a functional partner of RNF20/40, regulates histone H2B ubiquitination and gene transcription.</title>
        <authorList>
            <person name="Zhang F."/>
            <person name="Yu X."/>
        </authorList>
    </citation>
    <scope>INTERACTION WITH WAC</scope>
</reference>
<reference key="17">
    <citation type="journal article" date="2024" name="Nat. Struct. Mol. Biol.">
        <title>UBE2A and UBE2B are recruited by an atypical E3 ligase module in UBR4.</title>
        <authorList>
            <person name="Barnsby-Greer L."/>
            <person name="Mabbitt P.D."/>
            <person name="Dery M.A."/>
            <person name="Squair D.R."/>
            <person name="Wood N.T."/>
            <person name="Lamoliatte F."/>
            <person name="Lange S.M."/>
            <person name="Virdee S."/>
        </authorList>
    </citation>
    <scope>FUNCTION</scope>
</reference>
<reference key="18">
    <citation type="journal article" date="2002" name="J. Biomol. NMR">
        <title>The NMR structure of the class I human ubiquitin-conjugating enzyme 2b.</title>
        <authorList>
            <person name="Miura T."/>
            <person name="Klaus W."/>
            <person name="Ross A."/>
            <person name="Guntert P."/>
            <person name="Senn H."/>
        </authorList>
    </citation>
    <scope>STRUCTURE BY NMR</scope>
</reference>
<name>UBE2B_HUMAN</name>
<feature type="chain" id="PRO_0000082447" description="Ubiquitin-conjugating enzyme E2 B">
    <location>
        <begin position="1"/>
        <end position="152"/>
    </location>
</feature>
<feature type="domain" description="UBC core" evidence="2">
    <location>
        <begin position="4"/>
        <end position="150"/>
    </location>
</feature>
<feature type="active site" description="Glycyl thioester intermediate" evidence="2 3">
    <location>
        <position position="88"/>
    </location>
</feature>
<feature type="sequence conflict" description="In Ref. 2." evidence="15" ref="2">
    <original>VG</original>
    <variation>C</variation>
    <location>
        <begin position="22"/>
        <end position="23"/>
    </location>
</feature>
<feature type="sequence conflict" description="In Ref. 2." evidence="15" ref="2">
    <original>F</original>
    <variation>I</variation>
    <location>
        <position position="41"/>
    </location>
</feature>
<feature type="sequence conflict" description="In Ref. 2." evidence="15" ref="2">
    <original>K</original>
    <variation>R</variation>
    <location>
        <position position="54"/>
    </location>
</feature>
<feature type="helix" evidence="18">
    <location>
        <begin position="4"/>
        <end position="18"/>
    </location>
</feature>
<feature type="strand" evidence="18">
    <location>
        <begin position="24"/>
        <end position="29"/>
    </location>
</feature>
<feature type="strand" evidence="18">
    <location>
        <begin position="32"/>
        <end position="41"/>
    </location>
</feature>
<feature type="turn" evidence="18">
    <location>
        <begin position="47"/>
        <end position="50"/>
    </location>
</feature>
<feature type="strand" evidence="18">
    <location>
        <begin position="52"/>
        <end position="58"/>
    </location>
</feature>
<feature type="turn" evidence="18">
    <location>
        <begin position="61"/>
        <end position="65"/>
    </location>
</feature>
<feature type="strand" evidence="18">
    <location>
        <begin position="69"/>
        <end position="74"/>
    </location>
</feature>
<feature type="strand" evidence="19">
    <location>
        <begin position="85"/>
        <end position="87"/>
    </location>
</feature>
<feature type="helix" evidence="18">
    <location>
        <begin position="90"/>
        <end position="92"/>
    </location>
</feature>
<feature type="turn" evidence="18">
    <location>
        <begin position="93"/>
        <end position="95"/>
    </location>
</feature>
<feature type="helix" evidence="18">
    <location>
        <begin position="102"/>
        <end position="113"/>
    </location>
</feature>
<feature type="helix" evidence="18">
    <location>
        <begin position="124"/>
        <end position="132"/>
    </location>
</feature>
<feature type="helix" evidence="18">
    <location>
        <begin position="134"/>
        <end position="147"/>
    </location>
</feature>
<organism>
    <name type="scientific">Homo sapiens</name>
    <name type="common">Human</name>
    <dbReference type="NCBI Taxonomy" id="9606"/>
    <lineage>
        <taxon>Eukaryota</taxon>
        <taxon>Metazoa</taxon>
        <taxon>Chordata</taxon>
        <taxon>Craniata</taxon>
        <taxon>Vertebrata</taxon>
        <taxon>Euteleostomi</taxon>
        <taxon>Mammalia</taxon>
        <taxon>Eutheria</taxon>
        <taxon>Euarchontoglires</taxon>
        <taxon>Primates</taxon>
        <taxon>Haplorrhini</taxon>
        <taxon>Catarrhini</taxon>
        <taxon>Hominidae</taxon>
        <taxon>Homo</taxon>
    </lineage>
</organism>
<keyword id="KW-0002">3D-structure</keyword>
<keyword id="KW-0067">ATP-binding</keyword>
<keyword id="KW-1003">Cell membrane</keyword>
<keyword id="KW-0903">Direct protein sequencing</keyword>
<keyword id="KW-0227">DNA damage</keyword>
<keyword id="KW-0234">DNA repair</keyword>
<keyword id="KW-0472">Membrane</keyword>
<keyword id="KW-0547">Nucleotide-binding</keyword>
<keyword id="KW-0539">Nucleus</keyword>
<keyword id="KW-1267">Proteomics identification</keyword>
<keyword id="KW-1185">Reference proteome</keyword>
<keyword id="KW-0808">Transferase</keyword>
<keyword id="KW-0833">Ubl conjugation pathway</keyword>